<reference key="1">
    <citation type="journal article" date="2005" name="Nature">
        <title>The genome of the social amoeba Dictyostelium discoideum.</title>
        <authorList>
            <person name="Eichinger L."/>
            <person name="Pachebat J.A."/>
            <person name="Gloeckner G."/>
            <person name="Rajandream M.A."/>
            <person name="Sucgang R."/>
            <person name="Berriman M."/>
            <person name="Song J."/>
            <person name="Olsen R."/>
            <person name="Szafranski K."/>
            <person name="Xu Q."/>
            <person name="Tunggal B."/>
            <person name="Kummerfeld S."/>
            <person name="Madera M."/>
            <person name="Konfortov B.A."/>
            <person name="Rivero F."/>
            <person name="Bankier A.T."/>
            <person name="Lehmann R."/>
            <person name="Hamlin N."/>
            <person name="Davies R."/>
            <person name="Gaudet P."/>
            <person name="Fey P."/>
            <person name="Pilcher K."/>
            <person name="Chen G."/>
            <person name="Saunders D."/>
            <person name="Sodergren E.J."/>
            <person name="Davis P."/>
            <person name="Kerhornou A."/>
            <person name="Nie X."/>
            <person name="Hall N."/>
            <person name="Anjard C."/>
            <person name="Hemphill L."/>
            <person name="Bason N."/>
            <person name="Farbrother P."/>
            <person name="Desany B."/>
            <person name="Just E."/>
            <person name="Morio T."/>
            <person name="Rost R."/>
            <person name="Churcher C.M."/>
            <person name="Cooper J."/>
            <person name="Haydock S."/>
            <person name="van Driessche N."/>
            <person name="Cronin A."/>
            <person name="Goodhead I."/>
            <person name="Muzny D.M."/>
            <person name="Mourier T."/>
            <person name="Pain A."/>
            <person name="Lu M."/>
            <person name="Harper D."/>
            <person name="Lindsay R."/>
            <person name="Hauser H."/>
            <person name="James K.D."/>
            <person name="Quiles M."/>
            <person name="Madan Babu M."/>
            <person name="Saito T."/>
            <person name="Buchrieser C."/>
            <person name="Wardroper A."/>
            <person name="Felder M."/>
            <person name="Thangavelu M."/>
            <person name="Johnson D."/>
            <person name="Knights A."/>
            <person name="Loulseged H."/>
            <person name="Mungall K.L."/>
            <person name="Oliver K."/>
            <person name="Price C."/>
            <person name="Quail M.A."/>
            <person name="Urushihara H."/>
            <person name="Hernandez J."/>
            <person name="Rabbinowitsch E."/>
            <person name="Steffen D."/>
            <person name="Sanders M."/>
            <person name="Ma J."/>
            <person name="Kohara Y."/>
            <person name="Sharp S."/>
            <person name="Simmonds M.N."/>
            <person name="Spiegler S."/>
            <person name="Tivey A."/>
            <person name="Sugano S."/>
            <person name="White B."/>
            <person name="Walker D."/>
            <person name="Woodward J.R."/>
            <person name="Winckler T."/>
            <person name="Tanaka Y."/>
            <person name="Shaulsky G."/>
            <person name="Schleicher M."/>
            <person name="Weinstock G.M."/>
            <person name="Rosenthal A."/>
            <person name="Cox E.C."/>
            <person name="Chisholm R.L."/>
            <person name="Gibbs R.A."/>
            <person name="Loomis W.F."/>
            <person name="Platzer M."/>
            <person name="Kay R.R."/>
            <person name="Williams J.G."/>
            <person name="Dear P.H."/>
            <person name="Noegel A.A."/>
            <person name="Barrell B.G."/>
            <person name="Kuspa A."/>
        </authorList>
    </citation>
    <scope>NUCLEOTIDE SEQUENCE [LARGE SCALE GENOMIC DNA]</scope>
    <source>
        <strain>AX4</strain>
    </source>
</reference>
<feature type="chain" id="PRO_0000371404" description="Peroxisome biogenesis factor 3">
    <location>
        <begin position="1"/>
        <end position="405"/>
    </location>
</feature>
<feature type="topological domain" description="Cytoplasmic" evidence="2">
    <location>
        <begin position="1"/>
        <end position="26"/>
    </location>
</feature>
<feature type="transmembrane region" description="Helical" evidence="2">
    <location>
        <begin position="27"/>
        <end position="49"/>
    </location>
</feature>
<feature type="topological domain" description="Peroxisomal" evidence="2">
    <location>
        <begin position="50"/>
        <end position="124"/>
    </location>
</feature>
<feature type="transmembrane region" description="Helical" evidence="2">
    <location>
        <begin position="125"/>
        <end position="144"/>
    </location>
</feature>
<feature type="topological domain" description="Cytoplasmic" evidence="2">
    <location>
        <begin position="145"/>
        <end position="405"/>
    </location>
</feature>
<gene>
    <name type="primary">pex3</name>
    <name type="ORF">DDB_G0281213</name>
</gene>
<sequence>MENFQFEDLSPNKVSKVYQDLKKFGSFLYNHKMGVFLVSFSSGVAYLYHNITQSHKRKQIKLAKERVMTYFESTQKLSEREVDAIITKFIDENKILDKIQTPSLASIRSEKDPSEKLKLTDQLKVSIITKLFSVLYIIPMVTIFNRLQINLIGKYCYLDYVLYKDQEQHSMRLINQQTESNFINSRNNCYFFKDINFSQFINLIQEQIKISLKDWKIDQQSSFEGFLKLLINIRNNFEKKEIIASISSDNSLLKYLIPTEEEIDNLVQSQKTPENDNDIEYQNLKMLYNEIRNIFESQKFYDVLKDSINQSFLEFTKNLREDFESTELKKQIDSIVLPDLPIEMEIPKPLVTMHNIILLPKINKQIGNIIVNKKSIIEKIGSTDLINQLNYSVLTNDLDFNKVQF</sequence>
<organism>
    <name type="scientific">Dictyostelium discoideum</name>
    <name type="common">Social amoeba</name>
    <dbReference type="NCBI Taxonomy" id="44689"/>
    <lineage>
        <taxon>Eukaryota</taxon>
        <taxon>Amoebozoa</taxon>
        <taxon>Evosea</taxon>
        <taxon>Eumycetozoa</taxon>
        <taxon>Dictyostelia</taxon>
        <taxon>Dictyosteliales</taxon>
        <taxon>Dictyosteliaceae</taxon>
        <taxon>Dictyostelium</taxon>
    </lineage>
</organism>
<evidence type="ECO:0000250" key="1"/>
<evidence type="ECO:0000255" key="2"/>
<evidence type="ECO:0000305" key="3"/>
<protein>
    <recommendedName>
        <fullName>Peroxisome biogenesis factor 3</fullName>
    </recommendedName>
    <alternativeName>
        <fullName>Peroxin-3</fullName>
    </alternativeName>
</protein>
<name>PEX3_DICDI</name>
<comment type="function">
    <text evidence="1">Involved in peroxisome biosynthesis.</text>
</comment>
<comment type="subcellular location">
    <subcellularLocation>
        <location evidence="1">Peroxisome membrane</location>
        <topology evidence="1">Multi-pass membrane protein</topology>
    </subcellularLocation>
</comment>
<comment type="similarity">
    <text evidence="3">Belongs to the peroxin-3 family.</text>
</comment>
<keyword id="KW-0175">Coiled coil</keyword>
<keyword id="KW-0472">Membrane</keyword>
<keyword id="KW-0576">Peroxisome</keyword>
<keyword id="KW-0962">Peroxisome biogenesis</keyword>
<keyword id="KW-1185">Reference proteome</keyword>
<keyword id="KW-0812">Transmembrane</keyword>
<keyword id="KW-1133">Transmembrane helix</keyword>
<dbReference type="EMBL" id="AAFI02000040">
    <property type="protein sequence ID" value="EAL66903.1"/>
    <property type="molecule type" value="Genomic_DNA"/>
</dbReference>
<dbReference type="RefSeq" id="XP_640890.1">
    <property type="nucleotide sequence ID" value="XM_635798.1"/>
</dbReference>
<dbReference type="SMR" id="Q54U86"/>
<dbReference type="FunCoup" id="Q54U86">
    <property type="interactions" value="309"/>
</dbReference>
<dbReference type="STRING" id="44689.Q54U86"/>
<dbReference type="PaxDb" id="44689-DDB0238047"/>
<dbReference type="EnsemblProtists" id="EAL66903">
    <property type="protein sequence ID" value="EAL66903"/>
    <property type="gene ID" value="DDB_G0281213"/>
</dbReference>
<dbReference type="GeneID" id="8622947"/>
<dbReference type="KEGG" id="ddi:DDB_G0281213"/>
<dbReference type="dictyBase" id="DDB_G0281213">
    <property type="gene designation" value="pex3"/>
</dbReference>
<dbReference type="VEuPathDB" id="AmoebaDB:DDB_G0281213"/>
<dbReference type="eggNOG" id="KOG4444">
    <property type="taxonomic scope" value="Eukaryota"/>
</dbReference>
<dbReference type="HOGENOM" id="CLU_680480_0_0_1"/>
<dbReference type="InParanoid" id="Q54U86"/>
<dbReference type="OMA" id="FTRTVCA"/>
<dbReference type="PhylomeDB" id="Q54U86"/>
<dbReference type="Reactome" id="R-DDI-1369062">
    <property type="pathway name" value="ABC transporters in lipid homeostasis"/>
</dbReference>
<dbReference type="Reactome" id="R-DDI-9603798">
    <property type="pathway name" value="Class I peroxisomal membrane protein import"/>
</dbReference>
<dbReference type="PRO" id="PR:Q54U86"/>
<dbReference type="Proteomes" id="UP000002195">
    <property type="component" value="Chromosome 3"/>
</dbReference>
<dbReference type="GO" id="GO:0005778">
    <property type="term" value="C:peroxisomal membrane"/>
    <property type="evidence" value="ECO:0000318"/>
    <property type="project" value="GO_Central"/>
</dbReference>
<dbReference type="GO" id="GO:0005777">
    <property type="term" value="C:peroxisome"/>
    <property type="evidence" value="ECO:0000250"/>
    <property type="project" value="dictyBase"/>
</dbReference>
<dbReference type="GO" id="GO:0030674">
    <property type="term" value="F:protein-macromolecule adaptor activity"/>
    <property type="evidence" value="ECO:0000318"/>
    <property type="project" value="GO_Central"/>
</dbReference>
<dbReference type="GO" id="GO:0007031">
    <property type="term" value="P:peroxisome organization"/>
    <property type="evidence" value="ECO:0000250"/>
    <property type="project" value="dictyBase"/>
</dbReference>
<dbReference type="GO" id="GO:0045046">
    <property type="term" value="P:protein import into peroxisome membrane"/>
    <property type="evidence" value="ECO:0000318"/>
    <property type="project" value="GO_Central"/>
</dbReference>
<dbReference type="InterPro" id="IPR006966">
    <property type="entry name" value="Peroxin-3"/>
</dbReference>
<dbReference type="PANTHER" id="PTHR28080">
    <property type="entry name" value="PEROXISOMAL BIOGENESIS FACTOR 3"/>
    <property type="match status" value="1"/>
</dbReference>
<dbReference type="PANTHER" id="PTHR28080:SF1">
    <property type="entry name" value="PEROXISOMAL BIOGENESIS FACTOR 3"/>
    <property type="match status" value="1"/>
</dbReference>
<dbReference type="Pfam" id="PF04882">
    <property type="entry name" value="Peroxin-3"/>
    <property type="match status" value="1"/>
</dbReference>
<accession>Q54U86</accession>
<proteinExistence type="inferred from homology"/>